<feature type="chain" id="PRO_0000356941" description="Peroxynitrite isomerase">
    <location>
        <begin position="1"/>
        <end position="168"/>
    </location>
</feature>
<feature type="short sequence motif" description="GXWXGXG" evidence="1">
    <location>
        <begin position="25"/>
        <end position="31"/>
    </location>
</feature>
<feature type="binding site" description="axial binding residue" evidence="1">
    <location>
        <position position="160"/>
    </location>
    <ligand>
        <name>heme b</name>
        <dbReference type="ChEBI" id="CHEBI:60344"/>
    </ligand>
    <ligandPart>
        <name>Fe</name>
        <dbReference type="ChEBI" id="CHEBI:18248"/>
    </ligandPart>
</feature>
<keyword id="KW-0349">Heme</keyword>
<keyword id="KW-0408">Iron</keyword>
<keyword id="KW-0413">Isomerase</keyword>
<keyword id="KW-0479">Metal-binding</keyword>
<keyword id="KW-1185">Reference proteome</keyword>
<accession>Q5YS78</accession>
<protein>
    <recommendedName>
        <fullName>Peroxynitrite isomerase</fullName>
        <ecNumber evidence="1">5.99.-.-</ecNumber>
    </recommendedName>
    <alternativeName>
        <fullName>Ferric nitrobindin</fullName>
        <shortName>Nb(III)</shortName>
    </alternativeName>
</protein>
<name>NB_NOCFA</name>
<dbReference type="EC" id="5.99.-.-" evidence="1"/>
<dbReference type="EMBL" id="AP006618">
    <property type="protein sequence ID" value="BAD58963.1"/>
    <property type="molecule type" value="Genomic_DNA"/>
</dbReference>
<dbReference type="RefSeq" id="WP_011210648.1">
    <property type="nucleotide sequence ID" value="NC_006361.1"/>
</dbReference>
<dbReference type="SMR" id="Q5YS78"/>
<dbReference type="STRING" id="247156.NFA_41140"/>
<dbReference type="GeneID" id="61134754"/>
<dbReference type="KEGG" id="nfa:NFA_41140"/>
<dbReference type="eggNOG" id="COG4044">
    <property type="taxonomic scope" value="Bacteria"/>
</dbReference>
<dbReference type="HOGENOM" id="CLU_085483_0_0_11"/>
<dbReference type="OrthoDB" id="4804006at2"/>
<dbReference type="Proteomes" id="UP000006820">
    <property type="component" value="Chromosome"/>
</dbReference>
<dbReference type="GO" id="GO:0020037">
    <property type="term" value="F:heme binding"/>
    <property type="evidence" value="ECO:0007669"/>
    <property type="project" value="UniProtKB-UniRule"/>
</dbReference>
<dbReference type="GO" id="GO:0046872">
    <property type="term" value="F:metal ion binding"/>
    <property type="evidence" value="ECO:0007669"/>
    <property type="project" value="UniProtKB-KW"/>
</dbReference>
<dbReference type="GO" id="GO:0062213">
    <property type="term" value="F:peroxynitrite isomerase activity"/>
    <property type="evidence" value="ECO:0007669"/>
    <property type="project" value="UniProtKB-UniRule"/>
</dbReference>
<dbReference type="CDD" id="cd07828">
    <property type="entry name" value="lipocalin_heme-bd-THAP4-like"/>
    <property type="match status" value="1"/>
</dbReference>
<dbReference type="Gene3D" id="2.40.128.20">
    <property type="match status" value="1"/>
</dbReference>
<dbReference type="HAMAP" id="MF_01297">
    <property type="entry name" value="nitrobindin"/>
    <property type="match status" value="1"/>
</dbReference>
<dbReference type="InterPro" id="IPR012674">
    <property type="entry name" value="Calycin"/>
</dbReference>
<dbReference type="InterPro" id="IPR022939">
    <property type="entry name" value="Nb(III)_bact/plant"/>
</dbReference>
<dbReference type="InterPro" id="IPR045165">
    <property type="entry name" value="Nitrobindin"/>
</dbReference>
<dbReference type="InterPro" id="IPR054873">
    <property type="entry name" value="PeroxynitIsom"/>
</dbReference>
<dbReference type="InterPro" id="IPR014878">
    <property type="entry name" value="THAP4-like_heme-bd"/>
</dbReference>
<dbReference type="NCBIfam" id="NF045819">
    <property type="entry name" value="PeroxynitIsom"/>
    <property type="match status" value="1"/>
</dbReference>
<dbReference type="PANTHER" id="PTHR15854:SF4">
    <property type="entry name" value="PEROXYNITRITE ISOMERASE THAP4"/>
    <property type="match status" value="1"/>
</dbReference>
<dbReference type="PANTHER" id="PTHR15854">
    <property type="entry name" value="THAP4 PROTEIN"/>
    <property type="match status" value="1"/>
</dbReference>
<dbReference type="Pfam" id="PF08768">
    <property type="entry name" value="THAP4_heme-bd"/>
    <property type="match status" value="1"/>
</dbReference>
<dbReference type="SUPFAM" id="SSF50814">
    <property type="entry name" value="Lipocalins"/>
    <property type="match status" value="1"/>
</dbReference>
<proteinExistence type="inferred from homology"/>
<comment type="function">
    <text evidence="1">Heme-binding protein able to scavenge peroxynitrite and to protect free L-tyrosine against peroxynitrite-mediated nitration, by acting as a peroxynitrite isomerase that converts peroxynitrite to nitrate. Therefore, this protein likely plays a role in peroxynitrite sensing and in the detoxification of reactive nitrogen and oxygen species (RNS and ROS, respectively). Is able to bind nitric oxide (NO) in vitro, but may act as a sensor of peroxynitrite levels in vivo.</text>
</comment>
<comment type="catalytic activity">
    <reaction evidence="1">
        <text>peroxynitrite = nitrate</text>
        <dbReference type="Rhea" id="RHEA:63116"/>
        <dbReference type="ChEBI" id="CHEBI:17632"/>
        <dbReference type="ChEBI" id="CHEBI:25941"/>
    </reaction>
    <physiologicalReaction direction="left-to-right" evidence="1">
        <dbReference type="Rhea" id="RHEA:63117"/>
    </physiologicalReaction>
</comment>
<comment type="cofactor">
    <cofactor evidence="1">
        <name>heme b</name>
        <dbReference type="ChEBI" id="CHEBI:60344"/>
    </cofactor>
    <text evidence="1">Binds 1 heme b group per subunit, that coordinates a highly solvent-exposed Fe(III) atom.</text>
</comment>
<comment type="pathway">
    <text evidence="1">Nitrogen metabolism.</text>
</comment>
<comment type="subunit">
    <text evidence="1">Homodimer.</text>
</comment>
<comment type="domain">
    <text evidence="1">Forms a 10-stranded antiparallel beta-barrel structure able to accommodate a hydrophobic ligand in its interior. In fact, this fold hosts the heme group, which is located in a wide surface cleft.</text>
</comment>
<comment type="similarity">
    <text evidence="1">Belongs to the nitrobindin family.</text>
</comment>
<evidence type="ECO:0000255" key="1">
    <source>
        <dbReference type="HAMAP-Rule" id="MF_01297"/>
    </source>
</evidence>
<reference key="1">
    <citation type="journal article" date="2004" name="Proc. Natl. Acad. Sci. U.S.A.">
        <title>The complete genomic sequence of Nocardia farcinica IFM 10152.</title>
        <authorList>
            <person name="Ishikawa J."/>
            <person name="Yamashita A."/>
            <person name="Mikami Y."/>
            <person name="Hoshino Y."/>
            <person name="Kurita H."/>
            <person name="Hotta K."/>
            <person name="Shiba T."/>
            <person name="Hattori M."/>
        </authorList>
    </citation>
    <scope>NUCLEOTIDE SEQUENCE [LARGE SCALE GENOMIC DNA]</scope>
    <source>
        <strain>IFM 10152</strain>
    </source>
</reference>
<organism>
    <name type="scientific">Nocardia farcinica (strain IFM 10152)</name>
    <dbReference type="NCBI Taxonomy" id="247156"/>
    <lineage>
        <taxon>Bacteria</taxon>
        <taxon>Bacillati</taxon>
        <taxon>Actinomycetota</taxon>
        <taxon>Actinomycetes</taxon>
        <taxon>Mycobacteriales</taxon>
        <taxon>Nocardiaceae</taxon>
        <taxon>Nocardia</taxon>
    </lineage>
</organism>
<gene>
    <name type="ordered locus">NFA_41140</name>
</gene>
<sequence>MSAVAEPQPSVALHPDIAALAPLLGTWRGAGHGQYPTIESFDYHEEISFGHLGRPFLTYRQRTRAADGSRPMHAETGYLRRPRPDHVELILAHPTGITEICEGSLTIADGELRMDFDSTHIGRSSTAKLVTALGRSFRVAGDTIEYSLRMAAVGEPLTHHLAATLRRD</sequence>